<reference key="1">
    <citation type="journal article" date="2008" name="Plant Physiol.">
        <title>Identification, biochemical characterization, and subcellular localization of allantoate amidohydrolases from Arabidopsis and soybean.</title>
        <authorList>
            <person name="Werner A.K."/>
            <person name="Sparkes I.A."/>
            <person name="Romeis T."/>
            <person name="Witte C.P."/>
        </authorList>
    </citation>
    <scope>NUCLEOTIDE SEQUENCE [MRNA] (ISOFORM 1)</scope>
    <scope>FUNCTION</scope>
    <scope>CATALYTIC ACTIVITY</scope>
    <scope>COFACTOR</scope>
    <scope>ACTIVITY REGULATION</scope>
    <scope>SUBUNIT</scope>
    <scope>SUBCELLULAR LOCATION</scope>
    <source>
        <strain>cv. Williams 82</strain>
        <tissue>Leaf</tissue>
    </source>
</reference>
<reference key="2">
    <citation type="journal article" date="2009" name="J. Exp. Bot.">
        <title>Allantoate amidohydrolase transcript expression is independent of drought tolerance in soybean.</title>
        <authorList>
            <person name="Charlson D.V."/>
            <person name="Korth K.L."/>
            <person name="Purcell L.C."/>
        </authorList>
    </citation>
    <scope>NUCLEOTIDE SEQUENCE [MRNA] (ISOFORM 1)</scope>
    <scope>FUNCTION</scope>
    <scope>INDUCTION BY DROUGHT</scope>
    <source>
        <strain>cv. Williams 82</strain>
    </source>
</reference>
<reference key="3">
    <citation type="journal article" date="2010" name="Nature">
        <title>Genome sequence of the palaeopolyploid soybean.</title>
        <authorList>
            <person name="Schmutz J."/>
            <person name="Cannon S.B."/>
            <person name="Schlueter J."/>
            <person name="Ma J."/>
            <person name="Mitros T."/>
            <person name="Nelson W."/>
            <person name="Hyten D.L."/>
            <person name="Song Q."/>
            <person name="Thelen J.J."/>
            <person name="Cheng J."/>
            <person name="Xu D."/>
            <person name="Hellsten U."/>
            <person name="May G.D."/>
            <person name="Yu Y."/>
            <person name="Sakurai T."/>
            <person name="Umezawa T."/>
            <person name="Bhattacharyya M.K."/>
            <person name="Sandhu D."/>
            <person name="Valliyodan B."/>
            <person name="Lindquist E."/>
            <person name="Peto M."/>
            <person name="Grant D."/>
            <person name="Shu S."/>
            <person name="Goodstein D."/>
            <person name="Barry K."/>
            <person name="Futrell-Griggs M."/>
            <person name="Abernathy B."/>
            <person name="Du J."/>
            <person name="Tian Z."/>
            <person name="Zhu L."/>
            <person name="Gill N."/>
            <person name="Joshi T."/>
            <person name="Libault M."/>
            <person name="Sethuraman A."/>
            <person name="Zhang X.-C."/>
            <person name="Shinozaki K."/>
            <person name="Nguyen H.T."/>
            <person name="Wing R.A."/>
            <person name="Cregan P."/>
            <person name="Specht J."/>
            <person name="Grimwood J."/>
            <person name="Rokhsar D."/>
            <person name="Stacey G."/>
            <person name="Shoemaker R.C."/>
            <person name="Jackson S.A."/>
        </authorList>
    </citation>
    <scope>NUCLEOTIDE SEQUENCE [LARGE SCALE GENOMIC DNA]</scope>
    <source>
        <strain>cv. Williams 82</strain>
        <tissue>Callus</tissue>
    </source>
</reference>
<reference key="4">
    <citation type="journal article" date="2013" name="Plant Physiol.">
        <title>The ureide-degrading reactions of purine ring catabolism employ three amidohydrolases and one aminohydrolase in Arabidopsis, soybean, and rice.</title>
        <authorList>
            <person name="Werner A.K."/>
            <person name="Medina-Escobar N."/>
            <person name="Zulawski M."/>
            <person name="Sparkes I.A."/>
            <person name="Cao F.Q."/>
            <person name="Witte C.P."/>
        </authorList>
    </citation>
    <scope>CATALYTIC ACTIVITY</scope>
    <scope>BIOPHYSICOCHEMICAL PROPERTIES</scope>
    <scope>TISSUE SPECIFICITY</scope>
</reference>
<evidence type="ECO:0000250" key="1">
    <source>
        <dbReference type="UniProtKB" id="Q8VXY9"/>
    </source>
</evidence>
<evidence type="ECO:0000255" key="2"/>
<evidence type="ECO:0000269" key="3">
    <source>
    </source>
</evidence>
<evidence type="ECO:0000269" key="4">
    <source>
    </source>
</evidence>
<evidence type="ECO:0000269" key="5">
    <source>
    </source>
</evidence>
<evidence type="ECO:0000303" key="6">
    <source>
    </source>
</evidence>
<evidence type="ECO:0000305" key="7"/>
<feature type="signal peptide" evidence="2">
    <location>
        <begin position="1"/>
        <end position="30"/>
    </location>
</feature>
<feature type="chain" id="PRO_5009331204" description="Allantoate deiminase 1" evidence="2">
    <location>
        <begin position="31"/>
        <end position="483"/>
    </location>
</feature>
<feature type="binding site" evidence="1">
    <location>
        <position position="125"/>
    </location>
    <ligand>
        <name>Mn(2+)</name>
        <dbReference type="ChEBI" id="CHEBI:29035"/>
        <label>1</label>
    </ligand>
</feature>
<feature type="binding site" evidence="1">
    <location>
        <position position="136"/>
    </location>
    <ligand>
        <name>Mn(2+)</name>
        <dbReference type="ChEBI" id="CHEBI:29035"/>
        <label>1</label>
    </ligand>
</feature>
<feature type="binding site" evidence="1">
    <location>
        <position position="136"/>
    </location>
    <ligand>
        <name>Mn(2+)</name>
        <dbReference type="ChEBI" id="CHEBI:29035"/>
        <label>2</label>
    </ligand>
</feature>
<feature type="binding site" evidence="1">
    <location>
        <position position="173"/>
    </location>
    <ligand>
        <name>Mn(2+)</name>
        <dbReference type="ChEBI" id="CHEBI:29035"/>
        <label>2</label>
    </ligand>
</feature>
<feature type="binding site" evidence="1">
    <location>
        <position position="239"/>
    </location>
    <ligand>
        <name>Mn(2+)</name>
        <dbReference type="ChEBI" id="CHEBI:29035"/>
        <label>1</label>
    </ligand>
</feature>
<feature type="binding site" evidence="1">
    <location>
        <position position="457"/>
    </location>
    <ligand>
        <name>Mn(2+)</name>
        <dbReference type="ChEBI" id="CHEBI:29035"/>
        <label>2</label>
    </ligand>
</feature>
<feature type="splice variant" id="VSP_058827" description="In isoform 2.">
    <location>
        <begin position="1"/>
        <end position="80"/>
    </location>
</feature>
<feature type="sequence conflict" description="In Ref. 1; CAO78893." evidence="7" ref="1">
    <original>Y</original>
    <variation>S</variation>
    <location>
        <position position="2"/>
    </location>
</feature>
<name>AAH1_SOYBN</name>
<accession>C0M0V4</accession>
<accession>A9GYV1</accession>
<accession>I1MGU4</accession>
<keyword id="KW-0025">Alternative splicing</keyword>
<keyword id="KW-0256">Endoplasmic reticulum</keyword>
<keyword id="KW-0378">Hydrolase</keyword>
<keyword id="KW-0464">Manganese</keyword>
<keyword id="KW-0479">Metal-binding</keyword>
<keyword id="KW-0659">Purine metabolism</keyword>
<keyword id="KW-1185">Reference proteome</keyword>
<keyword id="KW-0732">Signal</keyword>
<comment type="function">
    <text evidence="3 4">Involved in the catabolism of purine nucleotides. Can use allantoate as substrate. The sequential activity of AAH, UGLYAH and UAH allows a complete purine breakdown without the intermediate generation of urea.</text>
</comment>
<comment type="catalytic activity">
    <reaction evidence="3 5">
        <text>allantoate + H2O + 2 H(+) = (S)-2-ureidoglycine + NH4(+) + CO2</text>
        <dbReference type="Rhea" id="RHEA:27485"/>
        <dbReference type="ChEBI" id="CHEBI:15377"/>
        <dbReference type="ChEBI" id="CHEBI:15378"/>
        <dbReference type="ChEBI" id="CHEBI:16526"/>
        <dbReference type="ChEBI" id="CHEBI:17536"/>
        <dbReference type="ChEBI" id="CHEBI:28938"/>
        <dbReference type="ChEBI" id="CHEBI:59947"/>
        <dbReference type="EC" id="3.5.3.9"/>
    </reaction>
</comment>
<comment type="cofactor">
    <cofactor evidence="3">
        <name>Mn(2+)</name>
        <dbReference type="ChEBI" id="CHEBI:29035"/>
    </cofactor>
    <text evidence="1">Binds 2 manganese ions per subunit.</text>
</comment>
<comment type="activity regulation">
    <text evidence="3">Inhibited by borate, fluoride, L-Asn and L-Asp.</text>
</comment>
<comment type="biophysicochemical properties">
    <kinetics>
        <KM evidence="5">72 uM for allantoate</KM>
        <text evidence="5">kcat is 37 sec(-1) for allantoate.</text>
    </kinetics>
</comment>
<comment type="subunit">
    <text evidence="3">Homodimer.</text>
</comment>
<comment type="subcellular location">
    <subcellularLocation>
        <location evidence="3">Endoplasmic reticulum</location>
    </subcellularLocation>
</comment>
<comment type="alternative products">
    <event type="alternative splicing"/>
    <isoform>
        <id>C0M0V4-1</id>
        <name>1</name>
        <sequence type="displayed"/>
    </isoform>
    <isoform>
        <id>C0M0V4-2</id>
        <name>2</name>
        <sequence type="described" ref="VSP_058827"/>
    </isoform>
</comment>
<comment type="tissue specificity">
    <text evidence="5">Expressed in roots, stems and leaves. Not detected in nodules.</text>
</comment>
<comment type="induction">
    <text evidence="4">Not regulated during water-deficit stress.</text>
</comment>
<comment type="similarity">
    <text evidence="7">Belongs to the peptidase M20A family.</text>
</comment>
<protein>
    <recommendedName>
        <fullName evidence="7">Allantoate deiminase 1</fullName>
        <ecNumber evidence="3">3.5.3.9</ecNumber>
    </recommendedName>
    <alternativeName>
        <fullName evidence="6">Allantoate amidohydrolase 1</fullName>
        <shortName evidence="6">GmAAH1</shortName>
    </alternativeName>
</protein>
<proteinExistence type="evidence at protein level"/>
<gene>
    <name evidence="6" type="primary">AAH1</name>
    <name type="ordered locus">Glyma15g16870</name>
</gene>
<organism>
    <name type="scientific">Glycine max</name>
    <name type="common">Soybean</name>
    <name type="synonym">Glycine hispida</name>
    <dbReference type="NCBI Taxonomy" id="3847"/>
    <lineage>
        <taxon>Eukaryota</taxon>
        <taxon>Viridiplantae</taxon>
        <taxon>Streptophyta</taxon>
        <taxon>Embryophyta</taxon>
        <taxon>Tracheophyta</taxon>
        <taxon>Spermatophyta</taxon>
        <taxon>Magnoliopsida</taxon>
        <taxon>eudicotyledons</taxon>
        <taxon>Gunneridae</taxon>
        <taxon>Pentapetalae</taxon>
        <taxon>rosids</taxon>
        <taxon>fabids</taxon>
        <taxon>Fabales</taxon>
        <taxon>Fabaceae</taxon>
        <taxon>Papilionoideae</taxon>
        <taxon>50 kb inversion clade</taxon>
        <taxon>NPAAA clade</taxon>
        <taxon>indigoferoid/millettioid clade</taxon>
        <taxon>Phaseoleae</taxon>
        <taxon>Glycine</taxon>
        <taxon>Glycine subgen. Soja</taxon>
    </lineage>
</organism>
<sequence>MYSATASNTFFLLSCFLLFCLLSAPSCVSMFSGIETGDLEKRDDLFPQILRDEAVARLYELGKVSDASGYLERTFLSPASMKAIDLIRKWMEDAGLRTWVDQMGNVHGRVDGANENAEALLIGSHMDTVVDAGMFDGSLGIVSAISAVKAMHVNGKLQKLKRPVEVIAFSDEEGVRFQTTFLGSGAIAGILPGTTLEISDKREVMIKDFLKENSMDITEESLLKLKYDPKSVWGYVEVHIEQGPVLEQVGFPLGVVKGIAGQTRLKVTVRGSQGHAGTVPMSMRQDPMAAAAEQIVVLESLCKHPEEYLSYDGHCSDSTVKSLSSSLVCTVGEISTWPSASNVIPGQVTYTVDIRAIDDLGREAVIYDLSKQIYQICDKRSVSCIIEHKHDAGAVICDSDLSSQLKSAAYSALKKMEGDIQDEVPTLMSGAGHDAMAISHLTKVGMLFVRCRGGISHSPQEHVLDNDVWAAGLATLSFLENLS</sequence>
<dbReference type="EC" id="3.5.3.9" evidence="3"/>
<dbReference type="EMBL" id="AM773229">
    <property type="protein sequence ID" value="CAO78893.1"/>
    <property type="molecule type" value="mRNA"/>
</dbReference>
<dbReference type="EMBL" id="FJ796239">
    <property type="protein sequence ID" value="ACN87318.1"/>
    <property type="molecule type" value="mRNA"/>
</dbReference>
<dbReference type="EMBL" id="CM000848">
    <property type="protein sequence ID" value="KRH12172.1"/>
    <property type="molecule type" value="Genomic_DNA"/>
</dbReference>
<dbReference type="EMBL" id="CM000848">
    <property type="protein sequence ID" value="KRH12173.1"/>
    <property type="molecule type" value="Genomic_DNA"/>
</dbReference>
<dbReference type="EMBL" id="CM000848">
    <property type="protein sequence ID" value="KRH12175.1"/>
    <property type="molecule type" value="Genomic_DNA"/>
</dbReference>
<dbReference type="EMBL" id="CM000848">
    <property type="protein sequence ID" value="KRH12174.1"/>
    <property type="molecule type" value="Genomic_DNA"/>
</dbReference>
<dbReference type="RefSeq" id="NP_001236563.1">
    <molecule id="C0M0V4-1"/>
    <property type="nucleotide sequence ID" value="NM_001249634.1"/>
</dbReference>
<dbReference type="RefSeq" id="XP_006596931.1">
    <property type="nucleotide sequence ID" value="XM_006596868.2"/>
</dbReference>
<dbReference type="RefSeq" id="XP_014622795.1">
    <molecule id="C0M0V4-1"/>
    <property type="nucleotide sequence ID" value="XM_014767309.1"/>
</dbReference>
<dbReference type="RefSeq" id="XP_014622796.1">
    <molecule id="C0M0V4-1"/>
    <property type="nucleotide sequence ID" value="XM_014767310.1"/>
</dbReference>
<dbReference type="SMR" id="C0M0V4"/>
<dbReference type="FunCoup" id="C0M0V4">
    <property type="interactions" value="24"/>
</dbReference>
<dbReference type="STRING" id="3847.C0M0V4"/>
<dbReference type="MEROPS" id="M20.A07"/>
<dbReference type="PaxDb" id="3847-GLYMA15G16870.3"/>
<dbReference type="EnsemblPlants" id="KRH12172">
    <molecule id="C0M0V4-1"/>
    <property type="protein sequence ID" value="KRH12172"/>
    <property type="gene ID" value="GLYMA_15G156900"/>
</dbReference>
<dbReference type="EnsemblPlants" id="KRH12173">
    <molecule id="C0M0V4-1"/>
    <property type="protein sequence ID" value="KRH12173"/>
    <property type="gene ID" value="GLYMA_15G156900"/>
</dbReference>
<dbReference type="EnsemblPlants" id="KRH12174">
    <molecule id="C0M0V4-2"/>
    <property type="protein sequence ID" value="KRH12174"/>
    <property type="gene ID" value="GLYMA_15G156900"/>
</dbReference>
<dbReference type="EnsemblPlants" id="KRH12175">
    <molecule id="C0M0V4-2"/>
    <property type="protein sequence ID" value="KRH12175"/>
    <property type="gene ID" value="GLYMA_15G156900"/>
</dbReference>
<dbReference type="GeneID" id="100137075"/>
<dbReference type="Gramene" id="KRH12172">
    <molecule id="C0M0V4-1"/>
    <property type="protein sequence ID" value="KRH12172"/>
    <property type="gene ID" value="GLYMA_15G156900"/>
</dbReference>
<dbReference type="Gramene" id="KRH12173">
    <molecule id="C0M0V4-1"/>
    <property type="protein sequence ID" value="KRH12173"/>
    <property type="gene ID" value="GLYMA_15G156900"/>
</dbReference>
<dbReference type="Gramene" id="KRH12174">
    <molecule id="C0M0V4-2"/>
    <property type="protein sequence ID" value="KRH12174"/>
    <property type="gene ID" value="GLYMA_15G156900"/>
</dbReference>
<dbReference type="Gramene" id="KRH12175">
    <molecule id="C0M0V4-2"/>
    <property type="protein sequence ID" value="KRH12175"/>
    <property type="gene ID" value="GLYMA_15G156900"/>
</dbReference>
<dbReference type="KEGG" id="gmx:100137075"/>
<dbReference type="eggNOG" id="ENOG502QSJ5">
    <property type="taxonomic scope" value="Eukaryota"/>
</dbReference>
<dbReference type="HOGENOM" id="CLU_024588_6_1_1"/>
<dbReference type="InParanoid" id="C0M0V4"/>
<dbReference type="OrthoDB" id="4676at2759"/>
<dbReference type="BRENDA" id="3.5.3.9">
    <property type="organism ID" value="2483"/>
</dbReference>
<dbReference type="SABIO-RK" id="C0M0V4"/>
<dbReference type="Proteomes" id="UP000008827">
    <property type="component" value="Chromosome 15"/>
</dbReference>
<dbReference type="GO" id="GO:0005783">
    <property type="term" value="C:endoplasmic reticulum"/>
    <property type="evidence" value="ECO:0007669"/>
    <property type="project" value="UniProtKB-SubCell"/>
</dbReference>
<dbReference type="GO" id="GO:0047652">
    <property type="term" value="F:allantoate deiminase activity"/>
    <property type="evidence" value="ECO:0007669"/>
    <property type="project" value="UniProtKB-EC"/>
</dbReference>
<dbReference type="GO" id="GO:0046872">
    <property type="term" value="F:metal ion binding"/>
    <property type="evidence" value="ECO:0007669"/>
    <property type="project" value="UniProtKB-KW"/>
</dbReference>
<dbReference type="GO" id="GO:0006144">
    <property type="term" value="P:purine nucleobase metabolic process"/>
    <property type="evidence" value="ECO:0007669"/>
    <property type="project" value="UniProtKB-KW"/>
</dbReference>
<dbReference type="CDD" id="cd03884">
    <property type="entry name" value="M20_bAS"/>
    <property type="match status" value="1"/>
</dbReference>
<dbReference type="FunFam" id="3.30.70.360:FF:000019">
    <property type="entry name" value="Allantoate deiminase"/>
    <property type="match status" value="1"/>
</dbReference>
<dbReference type="Gene3D" id="3.30.70.360">
    <property type="match status" value="1"/>
</dbReference>
<dbReference type="Gene3D" id="3.40.630.10">
    <property type="entry name" value="Zn peptidases"/>
    <property type="match status" value="1"/>
</dbReference>
<dbReference type="InterPro" id="IPR010158">
    <property type="entry name" value="Amidase_Cbmase"/>
</dbReference>
<dbReference type="InterPro" id="IPR001261">
    <property type="entry name" value="ArgE/DapE_CS"/>
</dbReference>
<dbReference type="InterPro" id="IPR036264">
    <property type="entry name" value="Bact_exopeptidase_dim_dom"/>
</dbReference>
<dbReference type="InterPro" id="IPR002933">
    <property type="entry name" value="Peptidase_M20"/>
</dbReference>
<dbReference type="InterPro" id="IPR011650">
    <property type="entry name" value="Peptidase_M20_dimer"/>
</dbReference>
<dbReference type="NCBIfam" id="TIGR01879">
    <property type="entry name" value="hydantase"/>
    <property type="match status" value="1"/>
</dbReference>
<dbReference type="PANTHER" id="PTHR32494">
    <property type="entry name" value="ALLANTOATE DEIMINASE-RELATED"/>
    <property type="match status" value="1"/>
</dbReference>
<dbReference type="PANTHER" id="PTHR32494:SF19">
    <property type="entry name" value="ALLANTOATE DEIMINASE-RELATED"/>
    <property type="match status" value="1"/>
</dbReference>
<dbReference type="Pfam" id="PF07687">
    <property type="entry name" value="M20_dimer"/>
    <property type="match status" value="1"/>
</dbReference>
<dbReference type="Pfam" id="PF01546">
    <property type="entry name" value="Peptidase_M20"/>
    <property type="match status" value="1"/>
</dbReference>
<dbReference type="SUPFAM" id="SSF55031">
    <property type="entry name" value="Bacterial exopeptidase dimerisation domain"/>
    <property type="match status" value="1"/>
</dbReference>
<dbReference type="SUPFAM" id="SSF53187">
    <property type="entry name" value="Zn-dependent exopeptidases"/>
    <property type="match status" value="1"/>
</dbReference>
<dbReference type="PROSITE" id="PS00758">
    <property type="entry name" value="ARGE_DAPE_CPG2_1"/>
    <property type="match status" value="1"/>
</dbReference>